<organism>
    <name type="scientific">Arthroderma gypseum (strain ATCC MYA-4604 / CBS 118893)</name>
    <name type="common">Microsporum gypseum</name>
    <dbReference type="NCBI Taxonomy" id="535722"/>
    <lineage>
        <taxon>Eukaryota</taxon>
        <taxon>Fungi</taxon>
        <taxon>Dikarya</taxon>
        <taxon>Ascomycota</taxon>
        <taxon>Pezizomycotina</taxon>
        <taxon>Eurotiomycetes</taxon>
        <taxon>Eurotiomycetidae</taxon>
        <taxon>Onygenales</taxon>
        <taxon>Arthrodermataceae</taxon>
        <taxon>Nannizzia</taxon>
    </lineage>
</organism>
<accession>E4UUX3</accession>
<evidence type="ECO:0000250" key="1"/>
<evidence type="ECO:0000255" key="2"/>
<evidence type="ECO:0000255" key="3">
    <source>
        <dbReference type="PROSITE-ProRule" id="PRU10095"/>
    </source>
</evidence>
<evidence type="ECO:0000305" key="4"/>
<feature type="signal peptide" evidence="2">
    <location>
        <begin position="1"/>
        <end position="19"/>
    </location>
</feature>
<feature type="propeptide" id="PRO_0000407084" evidence="1">
    <location>
        <begin position="20"/>
        <end position="188"/>
    </location>
</feature>
<feature type="chain" id="PRO_0000407085" description="Neutral protease 2 homolog MGYG_04094">
    <location>
        <begin position="189"/>
        <end position="366"/>
    </location>
</feature>
<feature type="active site" evidence="3">
    <location>
        <position position="318"/>
    </location>
</feature>
<feature type="binding site" evidence="3">
    <location>
        <position position="317"/>
    </location>
    <ligand>
        <name>Zn(2+)</name>
        <dbReference type="ChEBI" id="CHEBI:29105"/>
        <note>catalytic</note>
    </ligand>
</feature>
<feature type="binding site" evidence="3">
    <location>
        <position position="321"/>
    </location>
    <ligand>
        <name>Zn(2+)</name>
        <dbReference type="ChEBI" id="CHEBI:29105"/>
        <note>catalytic</note>
    </ligand>
</feature>
<feature type="binding site" evidence="3">
    <location>
        <position position="332"/>
    </location>
    <ligand>
        <name>Zn(2+)</name>
        <dbReference type="ChEBI" id="CHEBI:29105"/>
        <note>catalytic</note>
    </ligand>
</feature>
<feature type="disulfide bond" evidence="1">
    <location>
        <begin position="196"/>
        <end position="267"/>
    </location>
</feature>
<feature type="disulfide bond" evidence="1">
    <location>
        <begin position="274"/>
        <end position="292"/>
    </location>
</feature>
<keyword id="KW-0165">Cleavage on pair of basic residues</keyword>
<keyword id="KW-1015">Disulfide bond</keyword>
<keyword id="KW-0378">Hydrolase</keyword>
<keyword id="KW-0479">Metal-binding</keyword>
<keyword id="KW-0482">Metalloprotease</keyword>
<keyword id="KW-0645">Protease</keyword>
<keyword id="KW-1185">Reference proteome</keyword>
<keyword id="KW-0964">Secreted</keyword>
<keyword id="KW-0732">Signal</keyword>
<keyword id="KW-0843">Virulence</keyword>
<keyword id="KW-0862">Zinc</keyword>
<keyword id="KW-0865">Zymogen</keyword>
<sequence length="366" mass="39130">MQILAALSAIGALVATATAAAVPNAPAKQSMIDIQLSATGNTLIKATITNKGDKALNLLQFNTILDKNPTRKVRVYQNGTEVKFTGMLARYKMSNLSPDYFTTLGPKSSVESTFDIARTHDLTRGGKITVMASGTIPTAEGHGNGTSITGYARYESNKLELDVDAKKASSVAQAMGKVNKSRSTIDKRTNIDTSSCSQSQLEALEGALYNSAALAQAAAEAAPQSTDTVAEFFKSTSRNTIKTLVSRFQSVARESTYVNDGRTTYYCTDSMNGCSPGVLAYTLPDQNLIFNCPIYYSDLPPLAQSCYEQDQATTTLHEMTHNSAVVSPFCDDLGYGYDDATSLSASQALQNADSYALFANAIYLGC</sequence>
<protein>
    <recommendedName>
        <fullName>Neutral protease 2 homolog MGYG_04094</fullName>
        <ecNumber>3.4.24.39</ecNumber>
    </recommendedName>
    <alternativeName>
        <fullName>Deuterolysin MGYG_04094</fullName>
    </alternativeName>
</protein>
<name>NPIIA_ARTGP</name>
<dbReference type="EC" id="3.4.24.39"/>
<dbReference type="EMBL" id="DS989824">
    <property type="protein sequence ID" value="EFR01090.1"/>
    <property type="molecule type" value="Genomic_DNA"/>
</dbReference>
<dbReference type="RefSeq" id="XP_003173920.1">
    <property type="nucleotide sequence ID" value="XM_003173872.1"/>
</dbReference>
<dbReference type="SMR" id="E4UUX3"/>
<dbReference type="STRING" id="535722.E4UUX3"/>
<dbReference type="MEROPS" id="M35.001"/>
<dbReference type="GeneID" id="10029207"/>
<dbReference type="VEuPathDB" id="FungiDB:MGYG_04094"/>
<dbReference type="eggNOG" id="ENOG502SGF5">
    <property type="taxonomic scope" value="Eukaryota"/>
</dbReference>
<dbReference type="HOGENOM" id="CLU_039313_1_0_1"/>
<dbReference type="InParanoid" id="E4UUX3"/>
<dbReference type="OMA" id="ANCDLYY"/>
<dbReference type="OrthoDB" id="412874at2759"/>
<dbReference type="Proteomes" id="UP000002669">
    <property type="component" value="Unassembled WGS sequence"/>
</dbReference>
<dbReference type="GO" id="GO:0005576">
    <property type="term" value="C:extracellular region"/>
    <property type="evidence" value="ECO:0007669"/>
    <property type="project" value="UniProtKB-SubCell"/>
</dbReference>
<dbReference type="GO" id="GO:0046872">
    <property type="term" value="F:metal ion binding"/>
    <property type="evidence" value="ECO:0007669"/>
    <property type="project" value="UniProtKB-KW"/>
</dbReference>
<dbReference type="GO" id="GO:0004222">
    <property type="term" value="F:metalloendopeptidase activity"/>
    <property type="evidence" value="ECO:0007669"/>
    <property type="project" value="InterPro"/>
</dbReference>
<dbReference type="GO" id="GO:0006508">
    <property type="term" value="P:proteolysis"/>
    <property type="evidence" value="ECO:0007669"/>
    <property type="project" value="UniProtKB-KW"/>
</dbReference>
<dbReference type="CDD" id="cd11008">
    <property type="entry name" value="M35_deuterolysin_like"/>
    <property type="match status" value="1"/>
</dbReference>
<dbReference type="Gene3D" id="2.60.40.2970">
    <property type="match status" value="1"/>
</dbReference>
<dbReference type="Gene3D" id="3.40.390.10">
    <property type="entry name" value="Collagenase (Catalytic Domain)"/>
    <property type="match status" value="1"/>
</dbReference>
<dbReference type="InterPro" id="IPR050414">
    <property type="entry name" value="Fungal_M35_metalloproteases"/>
</dbReference>
<dbReference type="InterPro" id="IPR024079">
    <property type="entry name" value="MetalloPept_cat_dom_sf"/>
</dbReference>
<dbReference type="InterPro" id="IPR001384">
    <property type="entry name" value="Peptidase_M35"/>
</dbReference>
<dbReference type="PANTHER" id="PTHR37016">
    <property type="match status" value="1"/>
</dbReference>
<dbReference type="PANTHER" id="PTHR37016:SF3">
    <property type="entry name" value="NEUTRAL PROTEASE 2-RELATED"/>
    <property type="match status" value="1"/>
</dbReference>
<dbReference type="Pfam" id="PF02102">
    <property type="entry name" value="Peptidase_M35"/>
    <property type="match status" value="1"/>
</dbReference>
<dbReference type="PRINTS" id="PR00768">
    <property type="entry name" value="DEUTEROLYSIN"/>
</dbReference>
<dbReference type="SUPFAM" id="SSF55486">
    <property type="entry name" value="Metalloproteases ('zincins'), catalytic domain"/>
    <property type="match status" value="1"/>
</dbReference>
<dbReference type="PROSITE" id="PS00142">
    <property type="entry name" value="ZINC_PROTEASE"/>
    <property type="match status" value="1"/>
</dbReference>
<proteinExistence type="inferred from homology"/>
<comment type="function">
    <text evidence="1">Secreted metalloproteinase that allows assimilation of proteinaceous substrates. Shows high activities on basic nuclear substrates such as histone and protamine. May be involved in virulence (By similarity).</text>
</comment>
<comment type="catalytic activity">
    <reaction>
        <text>Preferential cleavage of bonds with hydrophobic residues in P1'. Also 3-Asn-|-Gln-4 and 8-Gly-|-Ser-9 bonds in insulin B chain.</text>
        <dbReference type="EC" id="3.4.24.39"/>
    </reaction>
</comment>
<comment type="cofactor">
    <cofactor evidence="1">
        <name>Zn(2+)</name>
        <dbReference type="ChEBI" id="CHEBI:29105"/>
    </cofactor>
    <text evidence="1">Binds 1 zinc ion per subunit.</text>
</comment>
<comment type="subcellular location">
    <subcellularLocation>
        <location evidence="1">Secreted</location>
    </subcellularLocation>
</comment>
<comment type="similarity">
    <text evidence="4">Belongs to the peptidase M35 family.</text>
</comment>
<gene>
    <name type="ORF">MGYG_04094</name>
</gene>
<reference key="1">
    <citation type="journal article" date="2012" name="MBio">
        <title>Comparative genome analysis of Trichophyton rubrum and related dermatophytes reveals candidate genes involved in infection.</title>
        <authorList>
            <person name="Martinez D.A."/>
            <person name="Oliver B.G."/>
            <person name="Graeser Y."/>
            <person name="Goldberg J.M."/>
            <person name="Li W."/>
            <person name="Martinez-Rossi N.M."/>
            <person name="Monod M."/>
            <person name="Shelest E."/>
            <person name="Barton R.C."/>
            <person name="Birch E."/>
            <person name="Brakhage A.A."/>
            <person name="Chen Z."/>
            <person name="Gurr S.J."/>
            <person name="Heiman D."/>
            <person name="Heitman J."/>
            <person name="Kosti I."/>
            <person name="Rossi A."/>
            <person name="Saif S."/>
            <person name="Samalova M."/>
            <person name="Saunders C.W."/>
            <person name="Shea T."/>
            <person name="Summerbell R.C."/>
            <person name="Xu J."/>
            <person name="Young S."/>
            <person name="Zeng Q."/>
            <person name="Birren B.W."/>
            <person name="Cuomo C.A."/>
            <person name="White T.C."/>
        </authorList>
    </citation>
    <scope>NUCLEOTIDE SEQUENCE [LARGE SCALE GENOMIC DNA]</scope>
    <source>
        <strain>ATCC MYA-4604 / CBS 118893</strain>
    </source>
</reference>